<proteinExistence type="inferred from homology"/>
<dbReference type="EMBL" id="CP000026">
    <property type="protein sequence ID" value="AAV79789.1"/>
    <property type="molecule type" value="Genomic_DNA"/>
</dbReference>
<dbReference type="RefSeq" id="WP_000982748.1">
    <property type="nucleotide sequence ID" value="NC_006511.1"/>
</dbReference>
<dbReference type="SMR" id="Q5PL02"/>
<dbReference type="KEGG" id="spt:SPA4043"/>
<dbReference type="HOGENOM" id="CLU_127561_0_1_6"/>
<dbReference type="Proteomes" id="UP000008185">
    <property type="component" value="Chromosome"/>
</dbReference>
<dbReference type="GO" id="GO:0005886">
    <property type="term" value="C:plasma membrane"/>
    <property type="evidence" value="ECO:0007669"/>
    <property type="project" value="UniProtKB-SubCell"/>
</dbReference>
<dbReference type="GO" id="GO:0016036">
    <property type="term" value="P:cellular response to phosphate starvation"/>
    <property type="evidence" value="ECO:0007669"/>
    <property type="project" value="InterPro"/>
</dbReference>
<dbReference type="HAMAP" id="MF_01048">
    <property type="entry name" value="PsiE"/>
    <property type="match status" value="1"/>
</dbReference>
<dbReference type="InterPro" id="IPR009315">
    <property type="entry name" value="P_starv_induced_PsiE"/>
</dbReference>
<dbReference type="InterPro" id="IPR020948">
    <property type="entry name" value="P_starv_induced_PsiE-like"/>
</dbReference>
<dbReference type="NCBIfam" id="NF002764">
    <property type="entry name" value="PRK02833.1-2"/>
    <property type="match status" value="1"/>
</dbReference>
<dbReference type="NCBIfam" id="NF002765">
    <property type="entry name" value="PRK02833.1-3"/>
    <property type="match status" value="1"/>
</dbReference>
<dbReference type="NCBIfam" id="NF002767">
    <property type="entry name" value="PRK02833.1-5"/>
    <property type="match status" value="1"/>
</dbReference>
<dbReference type="PANTHER" id="PTHR37819">
    <property type="entry name" value="PROTEIN PSIE"/>
    <property type="match status" value="1"/>
</dbReference>
<dbReference type="PANTHER" id="PTHR37819:SF1">
    <property type="entry name" value="PROTEIN PSIE"/>
    <property type="match status" value="1"/>
</dbReference>
<dbReference type="Pfam" id="PF06146">
    <property type="entry name" value="PsiE"/>
    <property type="match status" value="1"/>
</dbReference>
<dbReference type="PIRSF" id="PIRSF029598">
    <property type="entry name" value="PsiE"/>
    <property type="match status" value="1"/>
</dbReference>
<feature type="chain" id="PRO_0000160292" description="Protein PsiE">
    <location>
        <begin position="1"/>
        <end position="136"/>
    </location>
</feature>
<feature type="topological domain" description="Cytoplasmic" evidence="2">
    <location>
        <begin position="1"/>
        <end position="14"/>
    </location>
</feature>
<feature type="transmembrane region" description="Helical" evidence="2">
    <location>
        <begin position="15"/>
        <end position="35"/>
    </location>
</feature>
<feature type="topological domain" description="Periplasmic" evidence="2">
    <location>
        <begin position="36"/>
        <end position="54"/>
    </location>
</feature>
<feature type="transmembrane region" description="Helical" evidence="2">
    <location>
        <begin position="55"/>
        <end position="75"/>
    </location>
</feature>
<feature type="topological domain" description="Cytoplasmic" evidence="2">
    <location>
        <begin position="76"/>
        <end position="82"/>
    </location>
</feature>
<feature type="transmembrane region" description="Helical" evidence="2">
    <location>
        <begin position="83"/>
        <end position="103"/>
    </location>
</feature>
<feature type="topological domain" description="Periplasmic" evidence="2">
    <location>
        <begin position="104"/>
        <end position="107"/>
    </location>
</feature>
<feature type="transmembrane region" description="Helical" evidence="2">
    <location>
        <begin position="108"/>
        <end position="128"/>
    </location>
</feature>
<feature type="topological domain" description="Cytoplasmic" evidence="2">
    <location>
        <begin position="129"/>
        <end position="136"/>
    </location>
</feature>
<organism>
    <name type="scientific">Salmonella paratyphi A (strain ATCC 9150 / SARB42)</name>
    <dbReference type="NCBI Taxonomy" id="295319"/>
    <lineage>
        <taxon>Bacteria</taxon>
        <taxon>Pseudomonadati</taxon>
        <taxon>Pseudomonadota</taxon>
        <taxon>Gammaproteobacteria</taxon>
        <taxon>Enterobacterales</taxon>
        <taxon>Enterobacteriaceae</taxon>
        <taxon>Salmonella</taxon>
    </lineage>
</organism>
<evidence type="ECO:0000250" key="1"/>
<evidence type="ECO:0000255" key="2"/>
<evidence type="ECO:0000305" key="3"/>
<protein>
    <recommendedName>
        <fullName>Protein PsiE</fullName>
    </recommendedName>
</protein>
<gene>
    <name type="primary">psiE</name>
    <name type="ordered locus">SPA4043</name>
</gene>
<accession>Q5PL02</accession>
<reference key="1">
    <citation type="journal article" date="2004" name="Nat. Genet.">
        <title>Comparison of genome degradation in Paratyphi A and Typhi, human-restricted serovars of Salmonella enterica that cause typhoid.</title>
        <authorList>
            <person name="McClelland M."/>
            <person name="Sanderson K.E."/>
            <person name="Clifton S.W."/>
            <person name="Latreille P."/>
            <person name="Porwollik S."/>
            <person name="Sabo A."/>
            <person name="Meyer R."/>
            <person name="Bieri T."/>
            <person name="Ozersky P."/>
            <person name="McLellan M."/>
            <person name="Harkins C.R."/>
            <person name="Wang C."/>
            <person name="Nguyen C."/>
            <person name="Berghoff A."/>
            <person name="Elliott G."/>
            <person name="Kohlberg S."/>
            <person name="Strong C."/>
            <person name="Du F."/>
            <person name="Carter J."/>
            <person name="Kremizki C."/>
            <person name="Layman D."/>
            <person name="Leonard S."/>
            <person name="Sun H."/>
            <person name="Fulton L."/>
            <person name="Nash W."/>
            <person name="Miner T."/>
            <person name="Minx P."/>
            <person name="Delehaunty K."/>
            <person name="Fronick C."/>
            <person name="Magrini V."/>
            <person name="Nhan M."/>
            <person name="Warren W."/>
            <person name="Florea L."/>
            <person name="Spieth J."/>
            <person name="Wilson R.K."/>
        </authorList>
    </citation>
    <scope>NUCLEOTIDE SEQUENCE [LARGE SCALE GENOMIC DNA]</scope>
    <source>
        <strain>ATCC 9150 / SARB42</strain>
    </source>
</reference>
<name>PSIE_SALPA</name>
<sequence length="136" mass="15646">MMPLSRSRLEFIATILQNVLNLGLLTLGLILIVFLGKETVHLADALFVPEQASKYELVEGLVIYFLYFEFIALIVKYFKSGLHFPLRYFVYIGITAIVRLIIVDHKTPMDVLLYSAAILLLVITLWLCNSNRLRRE</sequence>
<keyword id="KW-0997">Cell inner membrane</keyword>
<keyword id="KW-1003">Cell membrane</keyword>
<keyword id="KW-0472">Membrane</keyword>
<keyword id="KW-0812">Transmembrane</keyword>
<keyword id="KW-1133">Transmembrane helix</keyword>
<comment type="subcellular location">
    <subcellularLocation>
        <location evidence="1">Cell inner membrane</location>
        <topology evidence="1">Multi-pass membrane protein</topology>
    </subcellularLocation>
</comment>
<comment type="similarity">
    <text evidence="3">Belongs to the PsiE family.</text>
</comment>